<name>VAPB4_MYCTU</name>
<comment type="function">
    <text evidence="1 2 3">Antitoxin component of a type II toxin-antitoxin (TA) system. Antitoxin that counteracts the effect of its cognate VapC4 toxin. Upon expression in situ, in M.smegmatis or E.coli neutralizes the effect of cognate toxin VapC4.</text>
</comment>
<comment type="subunit">
    <text evidence="2 3">Interacts with cognate toxin VapC4.</text>
</comment>
<comment type="domain">
    <text evidence="3">The C-terminal domain (residues 55-85) is sufficient to interact with and neutralize VapC4; exchanging the N-terminus (residues 1-54) with VapB5 allows neutralization, while exchanging the C-terminal domain (residues 55-85) does not. Many single residue mutations in the C-terminal domain construct but not in full-length protein prevent toxin neutralization, they are not all annotated here.</text>
</comment>
<comment type="similarity">
    <text evidence="4">Belongs to the phD/YefM antitoxin family.</text>
</comment>
<organism>
    <name type="scientific">Mycobacterium tuberculosis (strain ATCC 25618 / H37Rv)</name>
    <dbReference type="NCBI Taxonomy" id="83332"/>
    <lineage>
        <taxon>Bacteria</taxon>
        <taxon>Bacillati</taxon>
        <taxon>Actinomycetota</taxon>
        <taxon>Actinomycetes</taxon>
        <taxon>Mycobacteriales</taxon>
        <taxon>Mycobacteriaceae</taxon>
        <taxon>Mycobacterium</taxon>
        <taxon>Mycobacterium tuberculosis complex</taxon>
    </lineage>
</organism>
<protein>
    <recommendedName>
        <fullName>Antitoxin VapB4</fullName>
    </recommendedName>
    <alternativeName>
        <fullName>VapB-mt4</fullName>
    </alternativeName>
</protein>
<gene>
    <name type="primary">vapB4</name>
    <name type="ordered locus">Rv0596c</name>
</gene>
<sequence length="85" mass="9681">MSATIPARDLRNHTAEVLRRVAAGEEIEVLKDNRPVARIVPLKRRRQWLPAAEVIGELVRLGPDTTNLGEELRETLTQTTDDVRW</sequence>
<feature type="chain" id="PRO_0000408045" description="Antitoxin VapB4">
    <location>
        <begin position="1"/>
        <end position="85"/>
    </location>
</feature>
<feature type="region of interest" description="Not required to interact with or neutralize cognate toxin VapC4" evidence="3">
    <location>
        <begin position="1"/>
        <end position="54"/>
    </location>
</feature>
<feature type="region of interest" description="Sufficient to interact with and neutralize VapC4" evidence="3">
    <location>
        <begin position="55"/>
        <end position="85"/>
    </location>
</feature>
<feature type="mutagenesis site" description="No effect. No longer neutralizes VapC4 in full-length antitoxin, decreased interaction with VapC4 (tested for G-48 only); when associated with A-64." evidence="3">
    <original>W</original>
    <variation>G</variation>
    <variation>R</variation>
    <location>
        <position position="48"/>
    </location>
</feature>
<feature type="mutagenesis site" description="No effect. No longer neutralizes VapC4 in full-length antitoxin; when associated with A-64." evidence="3">
    <original>V</original>
    <variation>E</variation>
    <location>
        <position position="54"/>
    </location>
</feature>
<feature type="mutagenesis site" description="No effect. No longer neutralizes VapC4 in full-length VapB4; when associated with G-48; R-48 or E-54." evidence="3">
    <original>D</original>
    <variation>A</variation>
    <location>
        <position position="64"/>
    </location>
</feature>
<feature type="mutagenesis site" description="No effect. No longer neutralizes VapC4 in full-length VapB4; when associated with low levels of G-48." evidence="3">
    <original>T</original>
    <variation>A</variation>
    <location>
        <position position="66"/>
    </location>
</feature>
<feature type="mutagenesis site" description="No longer neutralizes VapC4 in full-length VapB4; when associated with low levels of G-48." evidence="3">
    <original>L</original>
    <variation>V</variation>
    <location>
        <position position="72"/>
    </location>
</feature>
<feature type="mutagenesis site" description="No effect. No longer neutralizes VapC4 in full-length VapB4; when associated with low levels of G-48." evidence="3">
    <original>Q</original>
    <variation>R</variation>
    <location>
        <position position="78"/>
    </location>
</feature>
<feature type="mutagenesis site" description="No effect. No longer neutralizes VapC4 in full-length VapB4; when associated with low levels of G-48." evidence="3">
    <original>T</original>
    <variation>S</variation>
    <location>
        <position position="80"/>
    </location>
</feature>
<reference key="1">
    <citation type="journal article" date="1998" name="Nature">
        <title>Deciphering the biology of Mycobacterium tuberculosis from the complete genome sequence.</title>
        <authorList>
            <person name="Cole S.T."/>
            <person name="Brosch R."/>
            <person name="Parkhill J."/>
            <person name="Garnier T."/>
            <person name="Churcher C.M."/>
            <person name="Harris D.E."/>
            <person name="Gordon S.V."/>
            <person name="Eiglmeier K."/>
            <person name="Gas S."/>
            <person name="Barry C.E. III"/>
            <person name="Tekaia F."/>
            <person name="Badcock K."/>
            <person name="Basham D."/>
            <person name="Brown D."/>
            <person name="Chillingworth T."/>
            <person name="Connor R."/>
            <person name="Davies R.M."/>
            <person name="Devlin K."/>
            <person name="Feltwell T."/>
            <person name="Gentles S."/>
            <person name="Hamlin N."/>
            <person name="Holroyd S."/>
            <person name="Hornsby T."/>
            <person name="Jagels K."/>
            <person name="Krogh A."/>
            <person name="McLean J."/>
            <person name="Moule S."/>
            <person name="Murphy L.D."/>
            <person name="Oliver S."/>
            <person name="Osborne J."/>
            <person name="Quail M.A."/>
            <person name="Rajandream M.A."/>
            <person name="Rogers J."/>
            <person name="Rutter S."/>
            <person name="Seeger K."/>
            <person name="Skelton S."/>
            <person name="Squares S."/>
            <person name="Squares R."/>
            <person name="Sulston J.E."/>
            <person name="Taylor K."/>
            <person name="Whitehead S."/>
            <person name="Barrell B.G."/>
        </authorList>
    </citation>
    <scope>NUCLEOTIDE SEQUENCE [LARGE SCALE GENOMIC DNA]</scope>
    <source>
        <strain>ATCC 25618 / H37Rv</strain>
    </source>
</reference>
<reference key="2">
    <citation type="journal article" date="2005" name="Nucleic Acids Res.">
        <title>Toxin-antitoxin loci are highly abundant in free-living but lost from host-associated prokaryotes.</title>
        <authorList>
            <person name="Pandey D.P."/>
            <person name="Gerdes K."/>
        </authorList>
    </citation>
    <scope>POSSIBLE FUNCTION</scope>
    <source>
        <strain>ATCC 25618 / H37Rv</strain>
    </source>
</reference>
<reference key="3">
    <citation type="journal article" date="2009" name="FEMS Microbiol. Lett.">
        <title>Killing activity and rescue function of genome-wide toxin-antitoxin loci of Mycobacterium tuberculosis.</title>
        <authorList>
            <person name="Gupta A."/>
        </authorList>
    </citation>
    <scope>EXPRESSION IN E.COLI</scope>
    <scope>FUNCTION AS AN ANTITOXIN</scope>
    <source>
        <strain>ATCC 25618 / H37Rv</strain>
    </source>
</reference>
<reference key="4">
    <citation type="journal article" date="2012" name="J. Biol. Chem.">
        <title>Growth and translation inhibition through sequence-specific RNA binding by Mycobacterium tuberculosis VapC toxin.</title>
        <authorList>
            <person name="Sharp J.D."/>
            <person name="Cruz J.W."/>
            <person name="Raman S."/>
            <person name="Inouye M."/>
            <person name="Husson R.N."/>
            <person name="Woychik N.A."/>
        </authorList>
    </citation>
    <scope>FUNCTION AS AN ANTITOXIN</scope>
    <scope>INTERACTION WITH VAPC4</scope>
    <source>
        <strain>ATCC 25618 / H37Rv</strain>
    </source>
</reference>
<reference key="5">
    <citation type="journal article" date="2015" name="J. Bacteriol.">
        <title>Structure-function analysis of VapB4 antitoxin identifies critical features of a minimal VapC4 toxin-binding module.</title>
        <authorList>
            <person name="Jin G."/>
            <person name="Pavelka M.S. Jr."/>
            <person name="Butler J.S."/>
        </authorList>
    </citation>
    <scope>FUNCTION</scope>
    <scope>INTERACTION WITH VAPC4</scope>
    <scope>DOMAIN</scope>
    <scope>MUTAGENESIS OF TRP-48; VAL-54; ASP-64; THR-66; LEU-72; GLN-78 AND THR-80</scope>
    <source>
        <strain>H37Rv</strain>
    </source>
</reference>
<dbReference type="EMBL" id="AL123456">
    <property type="protein sequence ID" value="CCP43335.1"/>
    <property type="molecule type" value="Genomic_DNA"/>
</dbReference>
<dbReference type="PIR" id="G70908">
    <property type="entry name" value="G70908"/>
</dbReference>
<dbReference type="RefSeq" id="NP_215110.1">
    <property type="nucleotide sequence ID" value="NC_000962.3"/>
</dbReference>
<dbReference type="RefSeq" id="WP_003403125.1">
    <property type="nucleotide sequence ID" value="NZ_NVQJ01000033.1"/>
</dbReference>
<dbReference type="SMR" id="P9WF21"/>
<dbReference type="STRING" id="83332.Rv0596c"/>
<dbReference type="PaxDb" id="83332-Rv0596c"/>
<dbReference type="DNASU" id="887846"/>
<dbReference type="GeneID" id="45424564"/>
<dbReference type="GeneID" id="887846"/>
<dbReference type="KEGG" id="mtu:Rv0596c"/>
<dbReference type="KEGG" id="mtv:RVBD_0596c"/>
<dbReference type="TubercuList" id="Rv0596c"/>
<dbReference type="eggNOG" id="COG4118">
    <property type="taxonomic scope" value="Bacteria"/>
</dbReference>
<dbReference type="InParanoid" id="P9WF21"/>
<dbReference type="OrthoDB" id="557859at2"/>
<dbReference type="Proteomes" id="UP000001584">
    <property type="component" value="Chromosome"/>
</dbReference>
<dbReference type="GO" id="GO:0097351">
    <property type="term" value="F:toxin sequestering activity"/>
    <property type="evidence" value="ECO:0000353"/>
    <property type="project" value="MTBBASE"/>
</dbReference>
<dbReference type="GO" id="GO:0098754">
    <property type="term" value="P:detoxification"/>
    <property type="evidence" value="ECO:0000315"/>
    <property type="project" value="MTBBASE"/>
</dbReference>
<dbReference type="FunFam" id="3.40.1620.10:FF:000002">
    <property type="entry name" value="Antitoxin"/>
    <property type="match status" value="1"/>
</dbReference>
<dbReference type="Gene3D" id="3.40.1620.10">
    <property type="entry name" value="YefM-like domain"/>
    <property type="match status" value="1"/>
</dbReference>
<dbReference type="InterPro" id="IPR006442">
    <property type="entry name" value="Antitoxin_Phd/YefM"/>
</dbReference>
<dbReference type="InterPro" id="IPR051416">
    <property type="entry name" value="phD-YefM_TA_antitoxins"/>
</dbReference>
<dbReference type="InterPro" id="IPR036165">
    <property type="entry name" value="YefM-like_sf"/>
</dbReference>
<dbReference type="NCBIfam" id="TIGR01552">
    <property type="entry name" value="phd_fam"/>
    <property type="match status" value="1"/>
</dbReference>
<dbReference type="PANTHER" id="PTHR35377:SF5">
    <property type="entry name" value="ANTITOXIN VAPB46"/>
    <property type="match status" value="1"/>
</dbReference>
<dbReference type="PANTHER" id="PTHR35377">
    <property type="entry name" value="ANTITOXIN VAPB49-RELATED-RELATED"/>
    <property type="match status" value="1"/>
</dbReference>
<dbReference type="Pfam" id="PF02604">
    <property type="entry name" value="PhdYeFM_antitox"/>
    <property type="match status" value="1"/>
</dbReference>
<dbReference type="SUPFAM" id="SSF143120">
    <property type="entry name" value="YefM-like"/>
    <property type="match status" value="1"/>
</dbReference>
<evidence type="ECO:0000269" key="1">
    <source>
    </source>
</evidence>
<evidence type="ECO:0000269" key="2">
    <source>
    </source>
</evidence>
<evidence type="ECO:0000269" key="3">
    <source>
    </source>
</evidence>
<evidence type="ECO:0000305" key="4"/>
<keyword id="KW-1185">Reference proteome</keyword>
<keyword id="KW-1277">Toxin-antitoxin system</keyword>
<proteinExistence type="evidence at protein level"/>
<accession>P9WF21</accession>
<accession>L0T456</accession>
<accession>O07782</accession>
<accession>Q7D9K5</accession>